<name>PRSA_STRZT</name>
<accession>C1CRR9</accession>
<feature type="signal peptide" evidence="1">
    <location>
        <begin position="1"/>
        <end position="20"/>
    </location>
</feature>
<feature type="chain" id="PRO_1000164119" description="Foldase protein PrsA">
    <location>
        <begin position="21"/>
        <end position="313"/>
    </location>
</feature>
<feature type="domain" description="PpiC" evidence="1">
    <location>
        <begin position="143"/>
        <end position="241"/>
    </location>
</feature>
<feature type="lipid moiety-binding region" description="N-palmitoyl cysteine" evidence="1">
    <location>
        <position position="21"/>
    </location>
</feature>
<feature type="lipid moiety-binding region" description="S-diacylglycerol cysteine" evidence="1">
    <location>
        <position position="21"/>
    </location>
</feature>
<dbReference type="EC" id="5.2.1.8" evidence="1"/>
<dbReference type="EMBL" id="CP000921">
    <property type="protein sequence ID" value="ACO22544.1"/>
    <property type="molecule type" value="Genomic_DNA"/>
</dbReference>
<dbReference type="RefSeq" id="WP_000727935.1">
    <property type="nucleotide sequence ID" value="NC_012469.1"/>
</dbReference>
<dbReference type="SMR" id="C1CRR9"/>
<dbReference type="KEGG" id="snt:SPT_1222"/>
<dbReference type="HOGENOM" id="CLU_034646_6_0_9"/>
<dbReference type="GO" id="GO:0005886">
    <property type="term" value="C:plasma membrane"/>
    <property type="evidence" value="ECO:0007669"/>
    <property type="project" value="UniProtKB-SubCell"/>
</dbReference>
<dbReference type="GO" id="GO:0003755">
    <property type="term" value="F:peptidyl-prolyl cis-trans isomerase activity"/>
    <property type="evidence" value="ECO:0007669"/>
    <property type="project" value="UniProtKB-UniRule"/>
</dbReference>
<dbReference type="GO" id="GO:0006457">
    <property type="term" value="P:protein folding"/>
    <property type="evidence" value="ECO:0007669"/>
    <property type="project" value="UniProtKB-UniRule"/>
</dbReference>
<dbReference type="Gene3D" id="3.10.50.40">
    <property type="match status" value="1"/>
</dbReference>
<dbReference type="HAMAP" id="MF_01145">
    <property type="entry name" value="Foldase_PrsA"/>
    <property type="match status" value="1"/>
</dbReference>
<dbReference type="InterPro" id="IPR023059">
    <property type="entry name" value="Foldase_PrsA"/>
</dbReference>
<dbReference type="InterPro" id="IPR046357">
    <property type="entry name" value="PPIase_dom_sf"/>
</dbReference>
<dbReference type="InterPro" id="IPR000297">
    <property type="entry name" value="PPIase_PpiC"/>
</dbReference>
<dbReference type="InterPro" id="IPR050245">
    <property type="entry name" value="PrsA_foldase"/>
</dbReference>
<dbReference type="InterPro" id="IPR027304">
    <property type="entry name" value="Trigger_fact/SurA_dom_sf"/>
</dbReference>
<dbReference type="NCBIfam" id="NF002361">
    <property type="entry name" value="PRK01326.1"/>
    <property type="match status" value="1"/>
</dbReference>
<dbReference type="PANTHER" id="PTHR47245:SF1">
    <property type="entry name" value="FOLDASE PROTEIN PRSA"/>
    <property type="match status" value="1"/>
</dbReference>
<dbReference type="PANTHER" id="PTHR47245">
    <property type="entry name" value="PEPTIDYLPROLYL ISOMERASE"/>
    <property type="match status" value="1"/>
</dbReference>
<dbReference type="Pfam" id="PF00639">
    <property type="entry name" value="Rotamase"/>
    <property type="match status" value="1"/>
</dbReference>
<dbReference type="SUPFAM" id="SSF54534">
    <property type="entry name" value="FKBP-like"/>
    <property type="match status" value="1"/>
</dbReference>
<dbReference type="SUPFAM" id="SSF109998">
    <property type="entry name" value="Triger factor/SurA peptide-binding domain-like"/>
    <property type="match status" value="1"/>
</dbReference>
<dbReference type="PROSITE" id="PS50198">
    <property type="entry name" value="PPIC_PPIASE_2"/>
    <property type="match status" value="1"/>
</dbReference>
<dbReference type="PROSITE" id="PS51257">
    <property type="entry name" value="PROKAR_LIPOPROTEIN"/>
    <property type="match status" value="1"/>
</dbReference>
<organism>
    <name type="scientific">Streptococcus pneumoniae (strain Taiwan19F-14)</name>
    <dbReference type="NCBI Taxonomy" id="487213"/>
    <lineage>
        <taxon>Bacteria</taxon>
        <taxon>Bacillati</taxon>
        <taxon>Bacillota</taxon>
        <taxon>Bacilli</taxon>
        <taxon>Lactobacillales</taxon>
        <taxon>Streptococcaceae</taxon>
        <taxon>Streptococcus</taxon>
    </lineage>
</organism>
<reference key="1">
    <citation type="journal article" date="2010" name="Genome Biol.">
        <title>Structure and dynamics of the pan-genome of Streptococcus pneumoniae and closely related species.</title>
        <authorList>
            <person name="Donati C."/>
            <person name="Hiller N.L."/>
            <person name="Tettelin H."/>
            <person name="Muzzi A."/>
            <person name="Croucher N.J."/>
            <person name="Angiuoli S.V."/>
            <person name="Oggioni M."/>
            <person name="Dunning Hotopp J.C."/>
            <person name="Hu F.Z."/>
            <person name="Riley D.R."/>
            <person name="Covacci A."/>
            <person name="Mitchell T.J."/>
            <person name="Bentley S.D."/>
            <person name="Kilian M."/>
            <person name="Ehrlich G.D."/>
            <person name="Rappuoli R."/>
            <person name="Moxon E.R."/>
            <person name="Masignani V."/>
        </authorList>
    </citation>
    <scope>NUCLEOTIDE SEQUENCE [LARGE SCALE GENOMIC DNA]</scope>
    <source>
        <strain>Taiwan19F-14</strain>
    </source>
</reference>
<evidence type="ECO:0000255" key="1">
    <source>
        <dbReference type="HAMAP-Rule" id="MF_01145"/>
    </source>
</evidence>
<sequence length="313" mass="34440">MKKKLLAGAITLLSVATLAACSKGSEGADLISMKGDVITEHQFYEQVKNNPSAQQVLLNMTIQKVFEKQYGSELDDKEVDDTIAEEKKQYGENYQRVLSQAGMTLETRKAQIRTSKLVELAVKKVAEAELTDEAYKKAFDEYTPDVTAQIIRLNNEDKAKEVLEKAKAEGADFAQLAKDNSTDEKTKENGGEITFDSASTEVPEQVKKAAFALDVDGVSDVITATGTQAYSSQYYIVKLTKKTEKSSNIDDYKEKLKTVILTQKQNDSTFVQSIIGKELQAANIKVKDQAFQNIFTQYIGGGDSSSSSSTSNE</sequence>
<comment type="function">
    <text evidence="1">Plays a major role in protein secretion by helping the post-translocational extracellular folding of several secreted proteins.</text>
</comment>
<comment type="catalytic activity">
    <reaction evidence="1">
        <text>[protein]-peptidylproline (omega=180) = [protein]-peptidylproline (omega=0)</text>
        <dbReference type="Rhea" id="RHEA:16237"/>
        <dbReference type="Rhea" id="RHEA-COMP:10747"/>
        <dbReference type="Rhea" id="RHEA-COMP:10748"/>
        <dbReference type="ChEBI" id="CHEBI:83833"/>
        <dbReference type="ChEBI" id="CHEBI:83834"/>
        <dbReference type="EC" id="5.2.1.8"/>
    </reaction>
</comment>
<comment type="subcellular location">
    <subcellularLocation>
        <location evidence="1">Cell membrane</location>
        <topology evidence="1">Lipid-anchor</topology>
    </subcellularLocation>
</comment>
<comment type="similarity">
    <text evidence="1">Belongs to the PrsA family.</text>
</comment>
<proteinExistence type="inferred from homology"/>
<keyword id="KW-1003">Cell membrane</keyword>
<keyword id="KW-0413">Isomerase</keyword>
<keyword id="KW-0449">Lipoprotein</keyword>
<keyword id="KW-0472">Membrane</keyword>
<keyword id="KW-0564">Palmitate</keyword>
<keyword id="KW-0697">Rotamase</keyword>
<keyword id="KW-0732">Signal</keyword>
<gene>
    <name evidence="1" type="primary">prsA</name>
    <name type="ordered locus">SPT_1222</name>
</gene>
<protein>
    <recommendedName>
        <fullName evidence="1">Foldase protein PrsA</fullName>
        <ecNumber evidence="1">5.2.1.8</ecNumber>
    </recommendedName>
</protein>